<reference key="1">
    <citation type="journal article" date="2003" name="Mol. Microbiol.">
        <title>Genome-based analysis of virulence genes in a non-biofilm-forming Staphylococcus epidermidis strain (ATCC 12228).</title>
        <authorList>
            <person name="Zhang Y.-Q."/>
            <person name="Ren S.-X."/>
            <person name="Li H.-L."/>
            <person name="Wang Y.-X."/>
            <person name="Fu G."/>
            <person name="Yang J."/>
            <person name="Qin Z.-Q."/>
            <person name="Miao Y.-G."/>
            <person name="Wang W.-Y."/>
            <person name="Chen R.-S."/>
            <person name="Shen Y."/>
            <person name="Chen Z."/>
            <person name="Yuan Z.-H."/>
            <person name="Zhao G.-P."/>
            <person name="Qu D."/>
            <person name="Danchin A."/>
            <person name="Wen Y.-M."/>
        </authorList>
    </citation>
    <scope>NUCLEOTIDE SEQUENCE [LARGE SCALE GENOMIC DNA]</scope>
    <source>
        <strain>ATCC 12228 / FDA PCI 1200</strain>
    </source>
</reference>
<sequence>MITAEKKKRNKFLPNFEKQSIYSLRYDEMQQWLIDHGQQKFRAKQIFEWLYQKRVNTIDEMTNLSKELRQILKDHFAMTTLTTVVKQESKDGTIKFLFELQDGYTIETVLMRHEYGNSVCVTTQVGCRIGCTFCASTLGGLKRNLEAGEIVSQVLTVQKALDETNERVSQIVIMGIGEPFENYDEMMDFLRIVNDDNSLNIGARHITVSTSGIIPRIYDFAEEDIQINFAVSLHGAKDEIRSRLMPINRAYNVDKLMEAIRYYQEKTNRRVTFEYGLFGGVNDQLEHARDLAHLIKNLNCHVNLIPVNHVPERNYVKTPKDDIFKFEKELKRLGINATIRREQGSDIDAACGQLRAKERQVETR</sequence>
<keyword id="KW-0004">4Fe-4S</keyword>
<keyword id="KW-0046">Antibiotic resistance</keyword>
<keyword id="KW-0963">Cytoplasm</keyword>
<keyword id="KW-1015">Disulfide bond</keyword>
<keyword id="KW-0408">Iron</keyword>
<keyword id="KW-0411">Iron-sulfur</keyword>
<keyword id="KW-0479">Metal-binding</keyword>
<keyword id="KW-0489">Methyltransferase</keyword>
<keyword id="KW-0698">rRNA processing</keyword>
<keyword id="KW-0949">S-adenosyl-L-methionine</keyword>
<keyword id="KW-0808">Transferase</keyword>
<keyword id="KW-0819">tRNA processing</keyword>
<proteinExistence type="inferred from homology"/>
<feature type="chain" id="PRO_0000350441" description="Probable dual-specificity RNA methyltransferase RlmN">
    <location>
        <begin position="1"/>
        <end position="364"/>
    </location>
</feature>
<feature type="domain" description="Radical SAM core" evidence="2">
    <location>
        <begin position="113"/>
        <end position="346"/>
    </location>
</feature>
<feature type="active site" description="Proton acceptor" evidence="1">
    <location>
        <position position="107"/>
    </location>
</feature>
<feature type="active site" description="S-methylcysteine intermediate" evidence="1">
    <location>
        <position position="351"/>
    </location>
</feature>
<feature type="binding site" evidence="1">
    <location>
        <position position="127"/>
    </location>
    <ligand>
        <name>[4Fe-4S] cluster</name>
        <dbReference type="ChEBI" id="CHEBI:49883"/>
        <note>4Fe-4S-S-AdoMet</note>
    </ligand>
</feature>
<feature type="binding site" evidence="1">
    <location>
        <position position="131"/>
    </location>
    <ligand>
        <name>[4Fe-4S] cluster</name>
        <dbReference type="ChEBI" id="CHEBI:49883"/>
        <note>4Fe-4S-S-AdoMet</note>
    </ligand>
</feature>
<feature type="binding site" evidence="1">
    <location>
        <position position="134"/>
    </location>
    <ligand>
        <name>[4Fe-4S] cluster</name>
        <dbReference type="ChEBI" id="CHEBI:49883"/>
        <note>4Fe-4S-S-AdoMet</note>
    </ligand>
</feature>
<feature type="binding site" evidence="1">
    <location>
        <begin position="177"/>
        <end position="178"/>
    </location>
    <ligand>
        <name>S-adenosyl-L-methionine</name>
        <dbReference type="ChEBI" id="CHEBI:59789"/>
    </ligand>
</feature>
<feature type="binding site" evidence="1">
    <location>
        <position position="209"/>
    </location>
    <ligand>
        <name>S-adenosyl-L-methionine</name>
        <dbReference type="ChEBI" id="CHEBI:59789"/>
    </ligand>
</feature>
<feature type="binding site" evidence="1">
    <location>
        <begin position="232"/>
        <end position="234"/>
    </location>
    <ligand>
        <name>S-adenosyl-L-methionine</name>
        <dbReference type="ChEBI" id="CHEBI:59789"/>
    </ligand>
</feature>
<feature type="binding site" evidence="1">
    <location>
        <position position="308"/>
    </location>
    <ligand>
        <name>S-adenosyl-L-methionine</name>
        <dbReference type="ChEBI" id="CHEBI:59789"/>
    </ligand>
</feature>
<feature type="disulfide bond" description="(transient)" evidence="1">
    <location>
        <begin position="120"/>
        <end position="351"/>
    </location>
</feature>
<name>RLMN_STAES</name>
<protein>
    <recommendedName>
        <fullName evidence="1">Probable dual-specificity RNA methyltransferase RlmN</fullName>
        <ecNumber evidence="1">2.1.1.192</ecNumber>
    </recommendedName>
    <alternativeName>
        <fullName evidence="1">23S rRNA (adenine(2503)-C(2))-methyltransferase</fullName>
    </alternativeName>
    <alternativeName>
        <fullName evidence="1">23S rRNA m2A2503 methyltransferase</fullName>
    </alternativeName>
    <alternativeName>
        <fullName evidence="1">Ribosomal RNA large subunit methyltransferase N</fullName>
    </alternativeName>
    <alternativeName>
        <fullName evidence="1">tRNA (adenine(37)-C(2))-methyltransferase</fullName>
    </alternativeName>
    <alternativeName>
        <fullName evidence="1">tRNA m2A37 methyltransferase</fullName>
    </alternativeName>
</protein>
<evidence type="ECO:0000255" key="1">
    <source>
        <dbReference type="HAMAP-Rule" id="MF_01849"/>
    </source>
</evidence>
<evidence type="ECO:0000255" key="2">
    <source>
        <dbReference type="PROSITE-ProRule" id="PRU01266"/>
    </source>
</evidence>
<dbReference type="EC" id="2.1.1.192" evidence="1"/>
<dbReference type="EMBL" id="AE015929">
    <property type="protein sequence ID" value="AAO04490.1"/>
    <property type="molecule type" value="Genomic_DNA"/>
</dbReference>
<dbReference type="RefSeq" id="NP_764448.1">
    <property type="nucleotide sequence ID" value="NC_004461.1"/>
</dbReference>
<dbReference type="RefSeq" id="WP_001830070.1">
    <property type="nucleotide sequence ID" value="NZ_WBME01000001.1"/>
</dbReference>
<dbReference type="SMR" id="Q8CSW0"/>
<dbReference type="GeneID" id="50018969"/>
<dbReference type="KEGG" id="sep:SE_0893"/>
<dbReference type="PATRIC" id="fig|176280.10.peg.866"/>
<dbReference type="eggNOG" id="COG0820">
    <property type="taxonomic scope" value="Bacteria"/>
</dbReference>
<dbReference type="HOGENOM" id="CLU_029101_0_1_9"/>
<dbReference type="OrthoDB" id="9793973at2"/>
<dbReference type="Proteomes" id="UP000001411">
    <property type="component" value="Chromosome"/>
</dbReference>
<dbReference type="GO" id="GO:0005737">
    <property type="term" value="C:cytoplasm"/>
    <property type="evidence" value="ECO:0007669"/>
    <property type="project" value="UniProtKB-SubCell"/>
</dbReference>
<dbReference type="GO" id="GO:0051539">
    <property type="term" value="F:4 iron, 4 sulfur cluster binding"/>
    <property type="evidence" value="ECO:0007669"/>
    <property type="project" value="UniProtKB-UniRule"/>
</dbReference>
<dbReference type="GO" id="GO:0046872">
    <property type="term" value="F:metal ion binding"/>
    <property type="evidence" value="ECO:0007669"/>
    <property type="project" value="UniProtKB-KW"/>
</dbReference>
<dbReference type="GO" id="GO:0070040">
    <property type="term" value="F:rRNA (adenine(2503)-C2-)-methyltransferase activity"/>
    <property type="evidence" value="ECO:0007669"/>
    <property type="project" value="UniProtKB-UniRule"/>
</dbReference>
<dbReference type="GO" id="GO:0019843">
    <property type="term" value="F:rRNA binding"/>
    <property type="evidence" value="ECO:0007669"/>
    <property type="project" value="UniProtKB-UniRule"/>
</dbReference>
<dbReference type="GO" id="GO:0002935">
    <property type="term" value="F:tRNA (adenine(37)-C2)-methyltransferase activity"/>
    <property type="evidence" value="ECO:0007669"/>
    <property type="project" value="UniProtKB-UniRule"/>
</dbReference>
<dbReference type="GO" id="GO:0000049">
    <property type="term" value="F:tRNA binding"/>
    <property type="evidence" value="ECO:0007669"/>
    <property type="project" value="UniProtKB-UniRule"/>
</dbReference>
<dbReference type="GO" id="GO:0046677">
    <property type="term" value="P:response to antibiotic"/>
    <property type="evidence" value="ECO:0007669"/>
    <property type="project" value="UniProtKB-KW"/>
</dbReference>
<dbReference type="GO" id="GO:0070475">
    <property type="term" value="P:rRNA base methylation"/>
    <property type="evidence" value="ECO:0007669"/>
    <property type="project" value="UniProtKB-UniRule"/>
</dbReference>
<dbReference type="GO" id="GO:0030488">
    <property type="term" value="P:tRNA methylation"/>
    <property type="evidence" value="ECO:0007669"/>
    <property type="project" value="UniProtKB-UniRule"/>
</dbReference>
<dbReference type="CDD" id="cd01335">
    <property type="entry name" value="Radical_SAM"/>
    <property type="match status" value="1"/>
</dbReference>
<dbReference type="FunFam" id="3.20.20.70:FF:000014">
    <property type="entry name" value="Probable dual-specificity RNA methyltransferase RlmN"/>
    <property type="match status" value="1"/>
</dbReference>
<dbReference type="Gene3D" id="1.10.150.530">
    <property type="match status" value="1"/>
</dbReference>
<dbReference type="Gene3D" id="3.20.20.70">
    <property type="entry name" value="Aldolase class I"/>
    <property type="match status" value="1"/>
</dbReference>
<dbReference type="HAMAP" id="MF_01849">
    <property type="entry name" value="RNA_methyltr_RlmN"/>
    <property type="match status" value="1"/>
</dbReference>
<dbReference type="InterPro" id="IPR013785">
    <property type="entry name" value="Aldolase_TIM"/>
</dbReference>
<dbReference type="InterPro" id="IPR040072">
    <property type="entry name" value="Methyltransferase_A"/>
</dbReference>
<dbReference type="InterPro" id="IPR048641">
    <property type="entry name" value="RlmN_N"/>
</dbReference>
<dbReference type="InterPro" id="IPR027492">
    <property type="entry name" value="RNA_MTrfase_RlmN"/>
</dbReference>
<dbReference type="InterPro" id="IPR004383">
    <property type="entry name" value="rRNA_lsu_MTrfase_RlmN/Cfr"/>
</dbReference>
<dbReference type="InterPro" id="IPR007197">
    <property type="entry name" value="rSAM"/>
</dbReference>
<dbReference type="NCBIfam" id="TIGR00048">
    <property type="entry name" value="rRNA_mod_RlmN"/>
    <property type="match status" value="1"/>
</dbReference>
<dbReference type="PANTHER" id="PTHR30544">
    <property type="entry name" value="23S RRNA METHYLTRANSFERASE"/>
    <property type="match status" value="1"/>
</dbReference>
<dbReference type="PANTHER" id="PTHR30544:SF5">
    <property type="entry name" value="RADICAL SAM CORE DOMAIN-CONTAINING PROTEIN"/>
    <property type="match status" value="1"/>
</dbReference>
<dbReference type="Pfam" id="PF04055">
    <property type="entry name" value="Radical_SAM"/>
    <property type="match status" value="1"/>
</dbReference>
<dbReference type="Pfam" id="PF21016">
    <property type="entry name" value="RlmN_N"/>
    <property type="match status" value="1"/>
</dbReference>
<dbReference type="PIRSF" id="PIRSF006004">
    <property type="entry name" value="CHP00048"/>
    <property type="match status" value="1"/>
</dbReference>
<dbReference type="SFLD" id="SFLDF00275">
    <property type="entry name" value="adenosine_C2_methyltransferase"/>
    <property type="match status" value="1"/>
</dbReference>
<dbReference type="SFLD" id="SFLDG01062">
    <property type="entry name" value="methyltransferase_(Class_A)"/>
    <property type="match status" value="1"/>
</dbReference>
<dbReference type="SUPFAM" id="SSF102114">
    <property type="entry name" value="Radical SAM enzymes"/>
    <property type="match status" value="1"/>
</dbReference>
<dbReference type="PROSITE" id="PS51918">
    <property type="entry name" value="RADICAL_SAM"/>
    <property type="match status" value="1"/>
</dbReference>
<organism>
    <name type="scientific">Staphylococcus epidermidis (strain ATCC 12228 / FDA PCI 1200)</name>
    <dbReference type="NCBI Taxonomy" id="176280"/>
    <lineage>
        <taxon>Bacteria</taxon>
        <taxon>Bacillati</taxon>
        <taxon>Bacillota</taxon>
        <taxon>Bacilli</taxon>
        <taxon>Bacillales</taxon>
        <taxon>Staphylococcaceae</taxon>
        <taxon>Staphylococcus</taxon>
    </lineage>
</organism>
<comment type="function">
    <text evidence="1">Specifically methylates position 2 of adenine 2503 in 23S rRNA and position 2 of adenine 37 in tRNAs. Confers resistance to some classes of antibiotics.</text>
</comment>
<comment type="catalytic activity">
    <reaction evidence="1">
        <text>adenosine(2503) in 23S rRNA + 2 reduced [2Fe-2S]-[ferredoxin] + 2 S-adenosyl-L-methionine = 2-methyladenosine(2503) in 23S rRNA + 5'-deoxyadenosine + L-methionine + 2 oxidized [2Fe-2S]-[ferredoxin] + S-adenosyl-L-homocysteine</text>
        <dbReference type="Rhea" id="RHEA:42916"/>
        <dbReference type="Rhea" id="RHEA-COMP:10000"/>
        <dbReference type="Rhea" id="RHEA-COMP:10001"/>
        <dbReference type="Rhea" id="RHEA-COMP:10152"/>
        <dbReference type="Rhea" id="RHEA-COMP:10282"/>
        <dbReference type="ChEBI" id="CHEBI:17319"/>
        <dbReference type="ChEBI" id="CHEBI:33737"/>
        <dbReference type="ChEBI" id="CHEBI:33738"/>
        <dbReference type="ChEBI" id="CHEBI:57844"/>
        <dbReference type="ChEBI" id="CHEBI:57856"/>
        <dbReference type="ChEBI" id="CHEBI:59789"/>
        <dbReference type="ChEBI" id="CHEBI:74411"/>
        <dbReference type="ChEBI" id="CHEBI:74497"/>
        <dbReference type="EC" id="2.1.1.192"/>
    </reaction>
</comment>
<comment type="catalytic activity">
    <reaction evidence="1">
        <text>adenosine(37) in tRNA + 2 reduced [2Fe-2S]-[ferredoxin] + 2 S-adenosyl-L-methionine = 2-methyladenosine(37) in tRNA + 5'-deoxyadenosine + L-methionine + 2 oxidized [2Fe-2S]-[ferredoxin] + S-adenosyl-L-homocysteine</text>
        <dbReference type="Rhea" id="RHEA:43332"/>
        <dbReference type="Rhea" id="RHEA-COMP:10000"/>
        <dbReference type="Rhea" id="RHEA-COMP:10001"/>
        <dbReference type="Rhea" id="RHEA-COMP:10162"/>
        <dbReference type="Rhea" id="RHEA-COMP:10485"/>
        <dbReference type="ChEBI" id="CHEBI:17319"/>
        <dbReference type="ChEBI" id="CHEBI:33737"/>
        <dbReference type="ChEBI" id="CHEBI:33738"/>
        <dbReference type="ChEBI" id="CHEBI:57844"/>
        <dbReference type="ChEBI" id="CHEBI:57856"/>
        <dbReference type="ChEBI" id="CHEBI:59789"/>
        <dbReference type="ChEBI" id="CHEBI:74411"/>
        <dbReference type="ChEBI" id="CHEBI:74497"/>
        <dbReference type="EC" id="2.1.1.192"/>
    </reaction>
</comment>
<comment type="cofactor">
    <cofactor evidence="1">
        <name>[4Fe-4S] cluster</name>
        <dbReference type="ChEBI" id="CHEBI:49883"/>
    </cofactor>
    <text evidence="1">Binds 1 [4Fe-4S] cluster. The cluster is coordinated with 3 cysteines and an exchangeable S-adenosyl-L-methionine.</text>
</comment>
<comment type="subcellular location">
    <subcellularLocation>
        <location evidence="1">Cytoplasm</location>
    </subcellularLocation>
</comment>
<comment type="miscellaneous">
    <text evidence="1">Reaction proceeds by a ping-pong mechanism involving intermediate methylation of a conserved cysteine residue.</text>
</comment>
<comment type="similarity">
    <text evidence="1">Belongs to the radical SAM superfamily. RlmN family.</text>
</comment>
<gene>
    <name evidence="1" type="primary">rlmN</name>
    <name type="ordered locus">SE_0893</name>
</gene>
<accession>Q8CSW0</accession>